<proteinExistence type="inferred from homology"/>
<accession>Q2UKX8</accession>
<reference key="1">
    <citation type="journal article" date="2005" name="Nature">
        <title>Genome sequencing and analysis of Aspergillus oryzae.</title>
        <authorList>
            <person name="Machida M."/>
            <person name="Asai K."/>
            <person name="Sano M."/>
            <person name="Tanaka T."/>
            <person name="Kumagai T."/>
            <person name="Terai G."/>
            <person name="Kusumoto K."/>
            <person name="Arima T."/>
            <person name="Akita O."/>
            <person name="Kashiwagi Y."/>
            <person name="Abe K."/>
            <person name="Gomi K."/>
            <person name="Horiuchi H."/>
            <person name="Kitamoto K."/>
            <person name="Kobayashi T."/>
            <person name="Takeuchi M."/>
            <person name="Denning D.W."/>
            <person name="Galagan J.E."/>
            <person name="Nierman W.C."/>
            <person name="Yu J."/>
            <person name="Archer D.B."/>
            <person name="Bennett J.W."/>
            <person name="Bhatnagar D."/>
            <person name="Cleveland T.E."/>
            <person name="Fedorova N.D."/>
            <person name="Gotoh O."/>
            <person name="Horikawa H."/>
            <person name="Hosoyama A."/>
            <person name="Ichinomiya M."/>
            <person name="Igarashi R."/>
            <person name="Iwashita K."/>
            <person name="Juvvadi P.R."/>
            <person name="Kato M."/>
            <person name="Kato Y."/>
            <person name="Kin T."/>
            <person name="Kokubun A."/>
            <person name="Maeda H."/>
            <person name="Maeyama N."/>
            <person name="Maruyama J."/>
            <person name="Nagasaki H."/>
            <person name="Nakajima T."/>
            <person name="Oda K."/>
            <person name="Okada K."/>
            <person name="Paulsen I."/>
            <person name="Sakamoto K."/>
            <person name="Sawano T."/>
            <person name="Takahashi M."/>
            <person name="Takase K."/>
            <person name="Terabayashi Y."/>
            <person name="Wortman J.R."/>
            <person name="Yamada O."/>
            <person name="Yamagata Y."/>
            <person name="Anazawa H."/>
            <person name="Hata Y."/>
            <person name="Koide Y."/>
            <person name="Komori T."/>
            <person name="Koyama Y."/>
            <person name="Minetoki T."/>
            <person name="Suharnan S."/>
            <person name="Tanaka A."/>
            <person name="Isono K."/>
            <person name="Kuhara S."/>
            <person name="Ogasawara N."/>
            <person name="Kikuchi H."/>
        </authorList>
    </citation>
    <scope>NUCLEOTIDE SEQUENCE [LARGE SCALE GENOMIC DNA]</scope>
    <source>
        <strain>ATCC 42149 / RIB 40</strain>
    </source>
</reference>
<name>CLU_ASPOR</name>
<sequence length="1249" mass="138805">MAQTNGELEHSKAETPEQLTNGNHPEETQEEEQNGGLFQISVKLPHEPYKIQVMVSSQEQVQDVRQSIVELPSTFQYTCFHLEFNGKRINDFVELSEVPDLKADSEIVLVEDPYTEKESRMHVIRMRELVGAAGDRVDNLQGISAGLSLHDSISEEAAAGETTEKEHSLSKYDIAGSPSLNTILPKAEAPLPKTVKSISLSPWNPVPYHLRQKGHLLYLQVTTNEGEQFQITSHVSGFFVNKCSNARFDPFPKPMPKKGSAHSLLTLISHLSPSFTTSFEALQEANNKKDLLTTFPFQNAIPNSPWLVAPPSSSVNAHQPDITRSQENYLISGVDNAETLRDWNEEFQTTRELPRDTVQDRVFRERLTSKLFADYNEAAARGAVLVAKGEVAPLNPTEDRDAQIFVYNNIFYSFGADGVGTFASEGGDEAARVAVGKDVVGIKAVNQLDINGLFTPGTVVVDYLGKRIVGQSIVPGIFKQREPGEHQIDYGGVEGKDVVATHPDFVPVFEKLSKALRIKKHAVWDKDGKRHDLEGSVETKGLLGTDGRKYVLDLYRVTPLDVMWQEEEGSDAYPHNMSVLRLELVESYWRHKMSQYVKAEVERRRAAKAVETASKEKSEENAESKEEGSEEKSEEALDQERVDISGFSLALNPDVCSGQIPQTDEEKEQWAQDEKEVRETCDFLRSKVMPELIQDLHDGDVGFPMDGQSLSQLLHKRGINIRYLGKLAQMSKEKGARLDALTLLLVQEMIARAFKHIANSYLRNVAAPFTASCIAHLLNCLLGADVNSNPQADIDASLREIYPEADFSFEKVTPTTLRAEIEKHVSTRYRYTPEPEWFNSLRHLQLLRDISIKLGLQLSAREYAFAKSQLPAKVPATNGASQEEGKKKKKKGGDSKSPARAASPEKPAVSIVPDDIVNIVPLVKDASPRSSLAEEALEAGRISLMQNQKQLGQELILESLSLHEQIYGILHPEVAKLYHQLSMLYYQTDEKEAAVELARKAVIVTERTLGVDSADTILSYLNLSLFEHASGNTKTALVYIKHAMDLWKIIYGPNHPDSITTMNNAAVMLQHLKQYSDSRKWFEASLTVCESLFGRQSINTATILFQLAQALALDQDSKGAVGKMRDAYNIFLSQLGPEDRNTKEAETWLEQLTQNAVSIAKHAKDIQARRLRRINMNTRTLGTKVQPQVGQSAPSASGASSANPSLDSRSIDELLKFIEGGDTSSSRTKQKKRAAASNPKLRGSKKSSA</sequence>
<organism>
    <name type="scientific">Aspergillus oryzae (strain ATCC 42149 / RIB 40)</name>
    <name type="common">Yellow koji mold</name>
    <dbReference type="NCBI Taxonomy" id="510516"/>
    <lineage>
        <taxon>Eukaryota</taxon>
        <taxon>Fungi</taxon>
        <taxon>Dikarya</taxon>
        <taxon>Ascomycota</taxon>
        <taxon>Pezizomycotina</taxon>
        <taxon>Eurotiomycetes</taxon>
        <taxon>Eurotiomycetidae</taxon>
        <taxon>Eurotiales</taxon>
        <taxon>Aspergillaceae</taxon>
        <taxon>Aspergillus</taxon>
        <taxon>Aspergillus subgen. Circumdati</taxon>
    </lineage>
</organism>
<gene>
    <name evidence="1" type="primary">clu1</name>
    <name type="synonym">tif31</name>
    <name type="ORF">AO090003000629</name>
</gene>
<protein>
    <recommendedName>
        <fullName evidence="1">Clustered mitochondria protein homolog</fullName>
    </recommendedName>
    <alternativeName>
        <fullName evidence="1">Protein TIF31 homolog</fullName>
    </alternativeName>
</protein>
<feature type="chain" id="PRO_0000366397" description="Clustered mitochondria protein homolog">
    <location>
        <begin position="1"/>
        <end position="1249"/>
    </location>
</feature>
<feature type="domain" description="Clu" evidence="2">
    <location>
        <begin position="321"/>
        <end position="565"/>
    </location>
</feature>
<feature type="repeat" description="TPR 1">
    <location>
        <begin position="975"/>
        <end position="1008"/>
    </location>
</feature>
<feature type="repeat" description="TPR 2">
    <location>
        <begin position="1017"/>
        <end position="1050"/>
    </location>
</feature>
<feature type="repeat" description="TPR 3">
    <location>
        <begin position="1059"/>
        <end position="1092"/>
    </location>
</feature>
<feature type="region of interest" description="Disordered" evidence="3">
    <location>
        <begin position="1"/>
        <end position="34"/>
    </location>
</feature>
<feature type="region of interest" description="Disordered" evidence="3">
    <location>
        <begin position="610"/>
        <end position="638"/>
    </location>
</feature>
<feature type="region of interest" description="Disordered" evidence="3">
    <location>
        <begin position="874"/>
        <end position="907"/>
    </location>
</feature>
<feature type="region of interest" description="Disordered" evidence="3">
    <location>
        <begin position="1178"/>
        <end position="1249"/>
    </location>
</feature>
<feature type="compositionally biased region" description="Basic and acidic residues" evidence="3">
    <location>
        <begin position="613"/>
        <end position="638"/>
    </location>
</feature>
<feature type="compositionally biased region" description="Polar residues" evidence="3">
    <location>
        <begin position="1178"/>
        <end position="1191"/>
    </location>
</feature>
<feature type="compositionally biased region" description="Low complexity" evidence="3">
    <location>
        <begin position="1192"/>
        <end position="1205"/>
    </location>
</feature>
<dbReference type="EMBL" id="BA000050">
    <property type="protein sequence ID" value="BAE57787.1"/>
    <property type="molecule type" value="Genomic_DNA"/>
</dbReference>
<dbReference type="SMR" id="Q2UKX8"/>
<dbReference type="STRING" id="510516.Q2UKX8"/>
<dbReference type="EnsemblFungi" id="BAE57787">
    <property type="protein sequence ID" value="BAE57787"/>
    <property type="gene ID" value="AO090003000629"/>
</dbReference>
<dbReference type="HOGENOM" id="CLU_003256_2_0_1"/>
<dbReference type="OMA" id="HPVWDKD"/>
<dbReference type="Proteomes" id="UP000006564">
    <property type="component" value="Chromosome 2"/>
</dbReference>
<dbReference type="GO" id="GO:0005737">
    <property type="term" value="C:cytoplasm"/>
    <property type="evidence" value="ECO:0007669"/>
    <property type="project" value="UniProtKB-SubCell"/>
</dbReference>
<dbReference type="GO" id="GO:0003729">
    <property type="term" value="F:mRNA binding"/>
    <property type="evidence" value="ECO:0007669"/>
    <property type="project" value="TreeGrafter"/>
</dbReference>
<dbReference type="GO" id="GO:0048312">
    <property type="term" value="P:intracellular distribution of mitochondria"/>
    <property type="evidence" value="ECO:0007669"/>
    <property type="project" value="TreeGrafter"/>
</dbReference>
<dbReference type="GO" id="GO:0007005">
    <property type="term" value="P:mitochondrion organization"/>
    <property type="evidence" value="ECO:0007669"/>
    <property type="project" value="UniProtKB-UniRule"/>
</dbReference>
<dbReference type="CDD" id="cd15466">
    <property type="entry name" value="CLU-central"/>
    <property type="match status" value="1"/>
</dbReference>
<dbReference type="FunFam" id="1.25.40.10:FF:000293">
    <property type="entry name" value="Clustered mitochondria protein homolog"/>
    <property type="match status" value="1"/>
</dbReference>
<dbReference type="FunFam" id="1.25.40.10:FF:000532">
    <property type="entry name" value="Clustered mitochondria protein homolog"/>
    <property type="match status" value="1"/>
</dbReference>
<dbReference type="Gene3D" id="1.25.40.10">
    <property type="entry name" value="Tetratricopeptide repeat domain"/>
    <property type="match status" value="2"/>
</dbReference>
<dbReference type="HAMAP" id="MF_03013">
    <property type="entry name" value="CLU"/>
    <property type="match status" value="1"/>
</dbReference>
<dbReference type="InterPro" id="IPR033646">
    <property type="entry name" value="CLU-central"/>
</dbReference>
<dbReference type="InterPro" id="IPR025697">
    <property type="entry name" value="CLU_dom"/>
</dbReference>
<dbReference type="InterPro" id="IPR028275">
    <property type="entry name" value="CLU_N"/>
</dbReference>
<dbReference type="InterPro" id="IPR027523">
    <property type="entry name" value="CLU_prot"/>
</dbReference>
<dbReference type="InterPro" id="IPR023231">
    <property type="entry name" value="GSKIP_dom_sf"/>
</dbReference>
<dbReference type="InterPro" id="IPR011990">
    <property type="entry name" value="TPR-like_helical_dom_sf"/>
</dbReference>
<dbReference type="InterPro" id="IPR019734">
    <property type="entry name" value="TPR_rpt"/>
</dbReference>
<dbReference type="PANTHER" id="PTHR12601:SF6">
    <property type="entry name" value="CLUSTERED MITOCHONDRIA PROTEIN HOMOLOG"/>
    <property type="match status" value="1"/>
</dbReference>
<dbReference type="PANTHER" id="PTHR12601">
    <property type="entry name" value="EUKARYOTIC TRANSLATION INITIATION FACTOR 3 SUBUNIT EIF-3"/>
    <property type="match status" value="1"/>
</dbReference>
<dbReference type="Pfam" id="PF13236">
    <property type="entry name" value="CLU"/>
    <property type="match status" value="1"/>
</dbReference>
<dbReference type="Pfam" id="PF15044">
    <property type="entry name" value="CLU_N"/>
    <property type="match status" value="1"/>
</dbReference>
<dbReference type="Pfam" id="PF12807">
    <property type="entry name" value="eIF3_p135"/>
    <property type="match status" value="1"/>
</dbReference>
<dbReference type="Pfam" id="PF13374">
    <property type="entry name" value="TPR_10"/>
    <property type="match status" value="2"/>
</dbReference>
<dbReference type="Pfam" id="PF13424">
    <property type="entry name" value="TPR_12"/>
    <property type="match status" value="1"/>
</dbReference>
<dbReference type="SUPFAM" id="SSF103107">
    <property type="entry name" value="Hypothetical protein c14orf129, hspc210"/>
    <property type="match status" value="1"/>
</dbReference>
<dbReference type="SUPFAM" id="SSF48452">
    <property type="entry name" value="TPR-like"/>
    <property type="match status" value="2"/>
</dbReference>
<dbReference type="PROSITE" id="PS51823">
    <property type="entry name" value="CLU"/>
    <property type="match status" value="1"/>
</dbReference>
<dbReference type="PROSITE" id="PS50005">
    <property type="entry name" value="TPR"/>
    <property type="match status" value="1"/>
</dbReference>
<evidence type="ECO:0000255" key="1">
    <source>
        <dbReference type="HAMAP-Rule" id="MF_03013"/>
    </source>
</evidence>
<evidence type="ECO:0000255" key="2">
    <source>
        <dbReference type="PROSITE-ProRule" id="PRU01167"/>
    </source>
</evidence>
<evidence type="ECO:0000256" key="3">
    <source>
        <dbReference type="SAM" id="MobiDB-lite"/>
    </source>
</evidence>
<comment type="function">
    <text evidence="1">mRNA-binding protein involved in proper cytoplasmic distribution of mitochondria.</text>
</comment>
<comment type="subunit">
    <text evidence="1">May associate with the eukaryotic translation initiation factor 3 (eIF-3) complex.</text>
</comment>
<comment type="subcellular location">
    <subcellularLocation>
        <location evidence="1">Cytoplasm</location>
    </subcellularLocation>
</comment>
<comment type="similarity">
    <text evidence="1">Belongs to the CLU family.</text>
</comment>
<keyword id="KW-0963">Cytoplasm</keyword>
<keyword id="KW-1185">Reference proteome</keyword>
<keyword id="KW-0677">Repeat</keyword>
<keyword id="KW-0802">TPR repeat</keyword>